<protein>
    <recommendedName>
        <fullName evidence="1">Formate--tetrahydrofolate ligase 2</fullName>
        <ecNumber evidence="1">6.3.4.3</ecNumber>
    </recommendedName>
    <alternativeName>
        <fullName evidence="1">Formyltetrahydrofolate synthetase 2</fullName>
        <shortName evidence="1">FHS 2</shortName>
        <shortName evidence="1">FTHFS 2</shortName>
    </alternativeName>
</protein>
<sequence length="553" mass="59847">MPTDIEIADAAKMQPITEIAQKLGLSSDDIEQYGHYKAKINLPVKEVEGKKHKLILVTGINPTSAGEGKSTVLVGLGDALNQLGHQTTIAMREPSMGPVFGIKGGATGGGYSQVVPMEDINLHFTGDMHALTSANNTLAALIDNYIMRDNVLGLDPRRIIWKRVEDVNDRVLRNVVTGLGGIMQGVPRETGFDITAASEMMAILCLSESLHNLKKRIGRIVVGYTYEKKPVTVDQLGFTGAITLLLKDAIKPNLVQTLDHTPAIIHGGPFANIAHGCNSVLATQIALKTSDYTVTECGFGADLGAEKFLDIKRPVLGETPNAVVIVATARALKLNGGADKDELTKEDIPALEKGMANLRRHVENMQKYNLPIVVAINHFNSDTEAEIKTIQDACAEMGVKAIEVDAWAKGGQGTQDLAKEVVKLADEELEFHELYKNSDSIEDKLSAIATKIYGAKRVVLSKKAKRQIKTFNEQGWNDLPVCIAKTQYSFTDDQTKLGAPTDFDFHIRDLVPKLGAGFIVALSGTMMTMPGLAKHPAAENMDIDDNGQIAGLF</sequence>
<accession>Q5FIU5</accession>
<dbReference type="EC" id="6.3.4.3" evidence="1"/>
<dbReference type="EMBL" id="CP000033">
    <property type="protein sequence ID" value="AAV43379.1"/>
    <property type="molecule type" value="Genomic_DNA"/>
</dbReference>
<dbReference type="RefSeq" id="WP_003548380.1">
    <property type="nucleotide sequence ID" value="NC_006814.3"/>
</dbReference>
<dbReference type="RefSeq" id="YP_194410.1">
    <property type="nucleotide sequence ID" value="NC_006814.3"/>
</dbReference>
<dbReference type="SMR" id="Q5FIU5"/>
<dbReference type="STRING" id="272621.LBA1562"/>
<dbReference type="KEGG" id="lac:LBA1562"/>
<dbReference type="PATRIC" id="fig|272621.13.peg.1484"/>
<dbReference type="eggNOG" id="COG2759">
    <property type="taxonomic scope" value="Bacteria"/>
</dbReference>
<dbReference type="HOGENOM" id="CLU_003601_3_3_9"/>
<dbReference type="OrthoDB" id="9761733at2"/>
<dbReference type="BioCyc" id="LACI272621:G1G49-1527-MONOMER"/>
<dbReference type="UniPathway" id="UPA00193"/>
<dbReference type="Proteomes" id="UP000006381">
    <property type="component" value="Chromosome"/>
</dbReference>
<dbReference type="GO" id="GO:0005524">
    <property type="term" value="F:ATP binding"/>
    <property type="evidence" value="ECO:0007669"/>
    <property type="project" value="UniProtKB-UniRule"/>
</dbReference>
<dbReference type="GO" id="GO:0004329">
    <property type="term" value="F:formate-tetrahydrofolate ligase activity"/>
    <property type="evidence" value="ECO:0007669"/>
    <property type="project" value="UniProtKB-UniRule"/>
</dbReference>
<dbReference type="GO" id="GO:0035999">
    <property type="term" value="P:tetrahydrofolate interconversion"/>
    <property type="evidence" value="ECO:0007669"/>
    <property type="project" value="UniProtKB-UniRule"/>
</dbReference>
<dbReference type="CDD" id="cd00477">
    <property type="entry name" value="FTHFS"/>
    <property type="match status" value="1"/>
</dbReference>
<dbReference type="FunFam" id="3.30.1510.10:FF:000001">
    <property type="entry name" value="Formate--tetrahydrofolate ligase"/>
    <property type="match status" value="1"/>
</dbReference>
<dbReference type="FunFam" id="3.10.410.10:FF:000001">
    <property type="entry name" value="Putative formate--tetrahydrofolate ligase"/>
    <property type="match status" value="1"/>
</dbReference>
<dbReference type="Gene3D" id="3.30.1510.10">
    <property type="entry name" value="Domain 2, N(10)-formyltetrahydrofolate synthetase"/>
    <property type="match status" value="1"/>
</dbReference>
<dbReference type="Gene3D" id="3.10.410.10">
    <property type="entry name" value="Formyltetrahydrofolate synthetase, domain 3"/>
    <property type="match status" value="1"/>
</dbReference>
<dbReference type="Gene3D" id="3.40.50.300">
    <property type="entry name" value="P-loop containing nucleotide triphosphate hydrolases"/>
    <property type="match status" value="1"/>
</dbReference>
<dbReference type="HAMAP" id="MF_01543">
    <property type="entry name" value="FTHFS"/>
    <property type="match status" value="1"/>
</dbReference>
<dbReference type="InterPro" id="IPR000559">
    <property type="entry name" value="Formate_THF_ligase"/>
</dbReference>
<dbReference type="InterPro" id="IPR020628">
    <property type="entry name" value="Formate_THF_ligase_CS"/>
</dbReference>
<dbReference type="InterPro" id="IPR027417">
    <property type="entry name" value="P-loop_NTPase"/>
</dbReference>
<dbReference type="NCBIfam" id="NF010030">
    <property type="entry name" value="PRK13505.1"/>
    <property type="match status" value="1"/>
</dbReference>
<dbReference type="Pfam" id="PF01268">
    <property type="entry name" value="FTHFS"/>
    <property type="match status" value="1"/>
</dbReference>
<dbReference type="SUPFAM" id="SSF52540">
    <property type="entry name" value="P-loop containing nucleoside triphosphate hydrolases"/>
    <property type="match status" value="1"/>
</dbReference>
<dbReference type="PROSITE" id="PS00721">
    <property type="entry name" value="FTHFS_1"/>
    <property type="match status" value="1"/>
</dbReference>
<dbReference type="PROSITE" id="PS00722">
    <property type="entry name" value="FTHFS_2"/>
    <property type="match status" value="1"/>
</dbReference>
<name>FTHS2_LACAC</name>
<evidence type="ECO:0000255" key="1">
    <source>
        <dbReference type="HAMAP-Rule" id="MF_01543"/>
    </source>
</evidence>
<comment type="catalytic activity">
    <reaction evidence="1">
        <text>(6S)-5,6,7,8-tetrahydrofolate + formate + ATP = (6R)-10-formyltetrahydrofolate + ADP + phosphate</text>
        <dbReference type="Rhea" id="RHEA:20221"/>
        <dbReference type="ChEBI" id="CHEBI:15740"/>
        <dbReference type="ChEBI" id="CHEBI:30616"/>
        <dbReference type="ChEBI" id="CHEBI:43474"/>
        <dbReference type="ChEBI" id="CHEBI:57453"/>
        <dbReference type="ChEBI" id="CHEBI:195366"/>
        <dbReference type="ChEBI" id="CHEBI:456216"/>
        <dbReference type="EC" id="6.3.4.3"/>
    </reaction>
</comment>
<comment type="pathway">
    <text evidence="1">One-carbon metabolism; tetrahydrofolate interconversion.</text>
</comment>
<comment type="similarity">
    <text evidence="1">Belongs to the formate--tetrahydrofolate ligase family.</text>
</comment>
<keyword id="KW-0067">ATP-binding</keyword>
<keyword id="KW-0436">Ligase</keyword>
<keyword id="KW-0547">Nucleotide-binding</keyword>
<keyword id="KW-0554">One-carbon metabolism</keyword>
<keyword id="KW-1185">Reference proteome</keyword>
<gene>
    <name evidence="1" type="primary">fhs2</name>
    <name type="ordered locus">LBA1562</name>
</gene>
<proteinExistence type="inferred from homology"/>
<feature type="chain" id="PRO_0000199352" description="Formate--tetrahydrofolate ligase 2">
    <location>
        <begin position="1"/>
        <end position="553"/>
    </location>
</feature>
<feature type="binding site" evidence="1">
    <location>
        <begin position="63"/>
        <end position="70"/>
    </location>
    <ligand>
        <name>ATP</name>
        <dbReference type="ChEBI" id="CHEBI:30616"/>
    </ligand>
</feature>
<reference key="1">
    <citation type="journal article" date="2005" name="Proc. Natl. Acad. Sci. U.S.A.">
        <title>Complete genome sequence of the probiotic lactic acid bacterium Lactobacillus acidophilus NCFM.</title>
        <authorList>
            <person name="Altermann E."/>
            <person name="Russell W.M."/>
            <person name="Azcarate-Peril M.A."/>
            <person name="Barrangou R."/>
            <person name="Buck B.L."/>
            <person name="McAuliffe O."/>
            <person name="Souther N."/>
            <person name="Dobson A."/>
            <person name="Duong T."/>
            <person name="Callanan M."/>
            <person name="Lick S."/>
            <person name="Hamrick A."/>
            <person name="Cano R."/>
            <person name="Klaenhammer T.R."/>
        </authorList>
    </citation>
    <scope>NUCLEOTIDE SEQUENCE [LARGE SCALE GENOMIC DNA]</scope>
    <source>
        <strain>ATCC 700396 / NCK56 / N2 / NCFM</strain>
    </source>
</reference>
<organism>
    <name type="scientific">Lactobacillus acidophilus (strain ATCC 700396 / NCK56 / N2 / NCFM)</name>
    <dbReference type="NCBI Taxonomy" id="272621"/>
    <lineage>
        <taxon>Bacteria</taxon>
        <taxon>Bacillati</taxon>
        <taxon>Bacillota</taxon>
        <taxon>Bacilli</taxon>
        <taxon>Lactobacillales</taxon>
        <taxon>Lactobacillaceae</taxon>
        <taxon>Lactobacillus</taxon>
    </lineage>
</organism>